<gene>
    <name type="ordered locus">Rv2081c</name>
    <name type="ORF">MTCY49.20c</name>
</gene>
<reference key="1">
    <citation type="journal article" date="1998" name="Nature">
        <title>Deciphering the biology of Mycobacterium tuberculosis from the complete genome sequence.</title>
        <authorList>
            <person name="Cole S.T."/>
            <person name="Brosch R."/>
            <person name="Parkhill J."/>
            <person name="Garnier T."/>
            <person name="Churcher C.M."/>
            <person name="Harris D.E."/>
            <person name="Gordon S.V."/>
            <person name="Eiglmeier K."/>
            <person name="Gas S."/>
            <person name="Barry C.E. III"/>
            <person name="Tekaia F."/>
            <person name="Badcock K."/>
            <person name="Basham D."/>
            <person name="Brown D."/>
            <person name="Chillingworth T."/>
            <person name="Connor R."/>
            <person name="Davies R.M."/>
            <person name="Devlin K."/>
            <person name="Feltwell T."/>
            <person name="Gentles S."/>
            <person name="Hamlin N."/>
            <person name="Holroyd S."/>
            <person name="Hornsby T."/>
            <person name="Jagels K."/>
            <person name="Krogh A."/>
            <person name="McLean J."/>
            <person name="Moule S."/>
            <person name="Murphy L.D."/>
            <person name="Oliver S."/>
            <person name="Osborne J."/>
            <person name="Quail M.A."/>
            <person name="Rajandream M.A."/>
            <person name="Rogers J."/>
            <person name="Rutter S."/>
            <person name="Seeger K."/>
            <person name="Skelton S."/>
            <person name="Squares S."/>
            <person name="Squares R."/>
            <person name="Sulston J.E."/>
            <person name="Taylor K."/>
            <person name="Whitehead S."/>
            <person name="Barrell B.G."/>
        </authorList>
    </citation>
    <scope>NUCLEOTIDE SEQUENCE [LARGE SCALE GENOMIC DNA]</scope>
    <source>
        <strain>ATCC 25618 / H37Rv</strain>
    </source>
</reference>
<sequence length="146" mass="14238">MFANAGLSPFVAIWTARAASLYTSHNFWCAAAVSAAVYVGSAVVPAAVAGPLFVGRVSATIKAAAPSTTAAIATLATAANGQLRERGGAGGWVGVHCPVVGGGGVGHPRKAIAAAVSVHSTCMPAAFGGHLGLGDRSRSVSLSGTP</sequence>
<organism>
    <name type="scientific">Mycobacterium tuberculosis (strain ATCC 25618 / H37Rv)</name>
    <dbReference type="NCBI Taxonomy" id="83332"/>
    <lineage>
        <taxon>Bacteria</taxon>
        <taxon>Bacillati</taxon>
        <taxon>Actinomycetota</taxon>
        <taxon>Actinomycetes</taxon>
        <taxon>Mycobacteriales</taxon>
        <taxon>Mycobacteriaceae</taxon>
        <taxon>Mycobacterium</taxon>
        <taxon>Mycobacterium tuberculosis complex</taxon>
    </lineage>
</organism>
<dbReference type="EMBL" id="AL123456">
    <property type="protein sequence ID" value="CCP44856.1"/>
    <property type="molecule type" value="Genomic_DNA"/>
</dbReference>
<dbReference type="PIR" id="D70766">
    <property type="entry name" value="D70766"/>
</dbReference>
<dbReference type="RefSeq" id="NP_216597.1">
    <property type="nucleotide sequence ID" value="NC_000962.3"/>
</dbReference>
<dbReference type="RefSeq" id="WP_003900458.1">
    <property type="nucleotide sequence ID" value="NC_000962.3"/>
</dbReference>
<dbReference type="STRING" id="83332.Rv2081c"/>
<dbReference type="PaxDb" id="83332-Rv2081c"/>
<dbReference type="GeneID" id="887348"/>
<dbReference type="KEGG" id="mtu:Rv2081c"/>
<dbReference type="KEGG" id="mtv:RVBD_2081c"/>
<dbReference type="TubercuList" id="Rv2081c"/>
<dbReference type="InParanoid" id="P9WLK5"/>
<dbReference type="Proteomes" id="UP000001584">
    <property type="component" value="Chromosome"/>
</dbReference>
<dbReference type="GO" id="GO:0005886">
    <property type="term" value="C:plasma membrane"/>
    <property type="evidence" value="ECO:0007669"/>
    <property type="project" value="UniProtKB-SubCell"/>
</dbReference>
<proteinExistence type="predicted"/>
<accession>P9WLK5</accession>
<accession>L0TA43</accession>
<accession>Q10689</accession>
<evidence type="ECO:0000255" key="1"/>
<evidence type="ECO:0000305" key="2"/>
<comment type="subcellular location">
    <subcellularLocation>
        <location evidence="2">Cell membrane</location>
        <topology evidence="2">Multi-pass membrane protein</topology>
    </subcellularLocation>
</comment>
<protein>
    <recommendedName>
        <fullName>Uncharacterized protein Rv2081c</fullName>
    </recommendedName>
</protein>
<keyword id="KW-1003">Cell membrane</keyword>
<keyword id="KW-0472">Membrane</keyword>
<keyword id="KW-1185">Reference proteome</keyword>
<keyword id="KW-0812">Transmembrane</keyword>
<keyword id="KW-1133">Transmembrane helix</keyword>
<name>Y2081_MYCTU</name>
<feature type="chain" id="PRO_0000103952" description="Uncharacterized protein Rv2081c">
    <location>
        <begin position="1"/>
        <end position="146"/>
    </location>
</feature>
<feature type="transmembrane region" description="Helical" evidence="1">
    <location>
        <begin position="1"/>
        <end position="21"/>
    </location>
</feature>
<feature type="transmembrane region" description="Helical" evidence="1">
    <location>
        <begin position="35"/>
        <end position="55"/>
    </location>
</feature>
<feature type="transmembrane region" description="Helical" evidence="1">
    <location>
        <begin position="87"/>
        <end position="107"/>
    </location>
</feature>
<feature type="transmembrane region" description="Helical" evidence="1">
    <location>
        <begin position="111"/>
        <end position="131"/>
    </location>
</feature>